<evidence type="ECO:0000250" key="1"/>
<evidence type="ECO:0000255" key="2">
    <source>
        <dbReference type="PROSITE-ProRule" id="PRU00387"/>
    </source>
</evidence>
<organism>
    <name type="scientific">Staphylococcus aureus (strain MRSA252)</name>
    <dbReference type="NCBI Taxonomy" id="282458"/>
    <lineage>
        <taxon>Bacteria</taxon>
        <taxon>Bacillati</taxon>
        <taxon>Bacillota</taxon>
        <taxon>Bacilli</taxon>
        <taxon>Bacillales</taxon>
        <taxon>Staphylococcaceae</taxon>
        <taxon>Staphylococcus</taxon>
    </lineage>
</organism>
<comment type="function">
    <text evidence="1">Positively regulates the expression of the arcABDCR operon under anaerobic conditions, thus playing an essential role in arginine catabolism. May also control the expression of genes encoding proteins which are involved in anaerobic metabolism. Can bind cyclic AMP (By similarity).</text>
</comment>
<comment type="subcellular location">
    <subcellularLocation>
        <location evidence="1">Cytoplasm</location>
    </subcellularLocation>
</comment>
<reference key="1">
    <citation type="journal article" date="2004" name="Proc. Natl. Acad. Sci. U.S.A.">
        <title>Complete genomes of two clinical Staphylococcus aureus strains: evidence for the rapid evolution of virulence and drug resistance.</title>
        <authorList>
            <person name="Holden M.T.G."/>
            <person name="Feil E.J."/>
            <person name="Lindsay J.A."/>
            <person name="Peacock S.J."/>
            <person name="Day N.P.J."/>
            <person name="Enright M.C."/>
            <person name="Foster T.J."/>
            <person name="Moore C.E."/>
            <person name="Hurst L."/>
            <person name="Atkin R."/>
            <person name="Barron A."/>
            <person name="Bason N."/>
            <person name="Bentley S.D."/>
            <person name="Chillingworth C."/>
            <person name="Chillingworth T."/>
            <person name="Churcher C."/>
            <person name="Clark L."/>
            <person name="Corton C."/>
            <person name="Cronin A."/>
            <person name="Doggett J."/>
            <person name="Dowd L."/>
            <person name="Feltwell T."/>
            <person name="Hance Z."/>
            <person name="Harris B."/>
            <person name="Hauser H."/>
            <person name="Holroyd S."/>
            <person name="Jagels K."/>
            <person name="James K.D."/>
            <person name="Lennard N."/>
            <person name="Line A."/>
            <person name="Mayes R."/>
            <person name="Moule S."/>
            <person name="Mungall K."/>
            <person name="Ormond D."/>
            <person name="Quail M.A."/>
            <person name="Rabbinowitsch E."/>
            <person name="Rutherford K.M."/>
            <person name="Sanders M."/>
            <person name="Sharp S."/>
            <person name="Simmonds M."/>
            <person name="Stevens K."/>
            <person name="Whitehead S."/>
            <person name="Barrell B.G."/>
            <person name="Spratt B.G."/>
            <person name="Parkhill J."/>
        </authorList>
    </citation>
    <scope>NUCLEOTIDE SEQUENCE [LARGE SCALE GENOMIC DNA]</scope>
    <source>
        <strain>MRSA252</strain>
    </source>
</reference>
<name>ARCR_STAAR</name>
<accession>Q6GDH1</accession>
<sequence>MTENFILGRNNKLEHELKALADYINIPYSILQPYQSECFVRHYTKGQVIYFSPQESSNIYFLIEGNIIREHYNQNGDVYRYFNKEQVLFPISNLFHPKEVNELCTALTDCTVLGLPRELMAFLCKANDDIFLTLFALINDNEQQHMNYNMALTSKFAKDRIIKLLCHLCQTVGYDQDEFYEIKQFLTIQLMSDMAGISRETAGHIIHELKDEKLVVKDHKNWLVSKHLFNDVCV</sequence>
<dbReference type="EMBL" id="BX571856">
    <property type="protein sequence ID" value="CAG41688.1"/>
    <property type="molecule type" value="Genomic_DNA"/>
</dbReference>
<dbReference type="RefSeq" id="WP_000138218.1">
    <property type="nucleotide sequence ID" value="NC_002952.2"/>
</dbReference>
<dbReference type="SMR" id="Q6GDH1"/>
<dbReference type="KEGG" id="sar:SAR2710"/>
<dbReference type="HOGENOM" id="CLU_1160528_0_0_9"/>
<dbReference type="Proteomes" id="UP000000596">
    <property type="component" value="Chromosome"/>
</dbReference>
<dbReference type="GO" id="GO:0005737">
    <property type="term" value="C:cytoplasm"/>
    <property type="evidence" value="ECO:0007669"/>
    <property type="project" value="UniProtKB-SubCell"/>
</dbReference>
<dbReference type="GO" id="GO:0030552">
    <property type="term" value="F:cAMP binding"/>
    <property type="evidence" value="ECO:0007669"/>
    <property type="project" value="UniProtKB-KW"/>
</dbReference>
<dbReference type="GO" id="GO:0003677">
    <property type="term" value="F:DNA binding"/>
    <property type="evidence" value="ECO:0007669"/>
    <property type="project" value="UniProtKB-KW"/>
</dbReference>
<dbReference type="GO" id="GO:0006355">
    <property type="term" value="P:regulation of DNA-templated transcription"/>
    <property type="evidence" value="ECO:0007669"/>
    <property type="project" value="InterPro"/>
</dbReference>
<dbReference type="Gene3D" id="2.60.120.10">
    <property type="entry name" value="Jelly Rolls"/>
    <property type="match status" value="1"/>
</dbReference>
<dbReference type="Gene3D" id="1.10.10.10">
    <property type="entry name" value="Winged helix-like DNA-binding domain superfamily/Winged helix DNA-binding domain"/>
    <property type="match status" value="1"/>
</dbReference>
<dbReference type="InterPro" id="IPR000595">
    <property type="entry name" value="cNMP-bd_dom"/>
</dbReference>
<dbReference type="InterPro" id="IPR018490">
    <property type="entry name" value="cNMP-bd_dom_sf"/>
</dbReference>
<dbReference type="InterPro" id="IPR012318">
    <property type="entry name" value="HTH_CRP"/>
</dbReference>
<dbReference type="InterPro" id="IPR014710">
    <property type="entry name" value="RmlC-like_jellyroll"/>
</dbReference>
<dbReference type="InterPro" id="IPR036388">
    <property type="entry name" value="WH-like_DNA-bd_sf"/>
</dbReference>
<dbReference type="InterPro" id="IPR036390">
    <property type="entry name" value="WH_DNA-bd_sf"/>
</dbReference>
<dbReference type="Pfam" id="PF00027">
    <property type="entry name" value="cNMP_binding"/>
    <property type="match status" value="1"/>
</dbReference>
<dbReference type="Pfam" id="PF13545">
    <property type="entry name" value="HTH_Crp_2"/>
    <property type="match status" value="1"/>
</dbReference>
<dbReference type="SUPFAM" id="SSF51206">
    <property type="entry name" value="cAMP-binding domain-like"/>
    <property type="match status" value="1"/>
</dbReference>
<dbReference type="SUPFAM" id="SSF46785">
    <property type="entry name" value="Winged helix' DNA-binding domain"/>
    <property type="match status" value="1"/>
</dbReference>
<dbReference type="PROSITE" id="PS51063">
    <property type="entry name" value="HTH_CRP_2"/>
    <property type="match status" value="1"/>
</dbReference>
<feature type="chain" id="PRO_0000349408" description="HTH-type transcriptional regulator ArcR">
    <location>
        <begin position="1"/>
        <end position="234"/>
    </location>
</feature>
<feature type="domain" description="HTH crp-type" evidence="2">
    <location>
        <begin position="155"/>
        <end position="228"/>
    </location>
</feature>
<feature type="DNA-binding region" description="H-T-H motif" evidence="2">
    <location>
        <begin position="188"/>
        <end position="207"/>
    </location>
</feature>
<feature type="binding site">
    <location>
        <begin position="40"/>
        <end position="129"/>
    </location>
    <ligand>
        <name>a nucleoside 3',5'-cyclic phosphate</name>
        <dbReference type="ChEBI" id="CHEBI:58464"/>
    </ligand>
</feature>
<gene>
    <name type="primary">arcR</name>
    <name type="ordered locus">SAR2710</name>
</gene>
<proteinExistence type="inferred from homology"/>
<protein>
    <recommendedName>
        <fullName>HTH-type transcriptional regulator ArcR</fullName>
    </recommendedName>
</protein>
<keyword id="KW-0010">Activator</keyword>
<keyword id="KW-0114">cAMP</keyword>
<keyword id="KW-0116">cAMP-binding</keyword>
<keyword id="KW-0963">Cytoplasm</keyword>
<keyword id="KW-0238">DNA-binding</keyword>
<keyword id="KW-0547">Nucleotide-binding</keyword>
<keyword id="KW-0804">Transcription</keyword>
<keyword id="KW-0805">Transcription regulation</keyword>